<protein>
    <recommendedName>
        <fullName evidence="3">Class I hydrophobin 19</fullName>
    </recommendedName>
</protein>
<reference key="1">
    <citation type="journal article" date="2014" name="Proc. Natl. Acad. Sci. U.S.A.">
        <title>Extensive sampling of basidiomycete genomes demonstrates inadequacy of the white-rot/brown-rot paradigm for wood decay fungi.</title>
        <authorList>
            <person name="Riley R."/>
            <person name="Salamov A.A."/>
            <person name="Brown D.W."/>
            <person name="Nagy L.G."/>
            <person name="Floudas D."/>
            <person name="Held B.W."/>
            <person name="Levasseur A."/>
            <person name="Lombard V."/>
            <person name="Morin E."/>
            <person name="Otillar R."/>
            <person name="Lindquist E.A."/>
            <person name="Sun H."/>
            <person name="LaButti K.M."/>
            <person name="Schmutz J."/>
            <person name="Jabbour D."/>
            <person name="Luo H."/>
            <person name="Baker S.E."/>
            <person name="Pisabarro A.G."/>
            <person name="Walton J.D."/>
            <person name="Blanchette R.A."/>
            <person name="Henrissat B."/>
            <person name="Martin F."/>
            <person name="Cullen D."/>
            <person name="Hibbett D.S."/>
            <person name="Grigoriev I.V."/>
        </authorList>
    </citation>
    <scope>NUCLEOTIDE SEQUENCE [LARGE SCALE GENOMIC DNA]</scope>
    <source>
        <strain>PC15</strain>
    </source>
</reference>
<reference key="2">
    <citation type="journal article" date="2021" name="Microbiol. Res.">
        <title>Identification of hydrophobin genes and their physiological functions related to growth and development in Pleurotus ostreatus.</title>
        <authorList>
            <person name="Xu D."/>
            <person name="Wang Y."/>
            <person name="Keerio A.A."/>
            <person name="Ma A."/>
        </authorList>
    </citation>
    <scope>IDENTIFICATION</scope>
</reference>
<gene>
    <name evidence="3" type="primary">Hydph19</name>
    <name type="ORF">PLEOSDRAFT_1072120</name>
</gene>
<organism>
    <name type="scientific">Pleurotus ostreatus (strain PC15)</name>
    <name type="common">Oyster mushroom</name>
    <dbReference type="NCBI Taxonomy" id="1137138"/>
    <lineage>
        <taxon>Eukaryota</taxon>
        <taxon>Fungi</taxon>
        <taxon>Dikarya</taxon>
        <taxon>Basidiomycota</taxon>
        <taxon>Agaricomycotina</taxon>
        <taxon>Agaricomycetes</taxon>
        <taxon>Agaricomycetidae</taxon>
        <taxon>Agaricales</taxon>
        <taxon>Pleurotineae</taxon>
        <taxon>Pleurotaceae</taxon>
        <taxon>Pleurotus</taxon>
    </lineage>
</organism>
<name>HYD19_PLEO1</name>
<accession>A0A067NRJ8</accession>
<dbReference type="EMBL" id="KL198010">
    <property type="protein sequence ID" value="KDQ26241.1"/>
    <property type="molecule type" value="Genomic_DNA"/>
</dbReference>
<dbReference type="STRING" id="1137138.A0A067NRJ8"/>
<dbReference type="VEuPathDB" id="FungiDB:PLEOSDRAFT_1072120"/>
<dbReference type="HOGENOM" id="CLU_105134_1_2_1"/>
<dbReference type="InParanoid" id="A0A067NRJ8"/>
<dbReference type="OrthoDB" id="138913at5338"/>
<dbReference type="Proteomes" id="UP000027073">
    <property type="component" value="Unassembled WGS sequence"/>
</dbReference>
<dbReference type="GO" id="GO:0005576">
    <property type="term" value="C:extracellular region"/>
    <property type="evidence" value="ECO:0007669"/>
    <property type="project" value="UniProtKB-KW"/>
</dbReference>
<dbReference type="GO" id="GO:0009277">
    <property type="term" value="C:fungal-type cell wall"/>
    <property type="evidence" value="ECO:0007669"/>
    <property type="project" value="InterPro"/>
</dbReference>
<dbReference type="GO" id="GO:0005199">
    <property type="term" value="F:structural constituent of cell wall"/>
    <property type="evidence" value="ECO:0007669"/>
    <property type="project" value="InterPro"/>
</dbReference>
<dbReference type="CDD" id="cd23507">
    <property type="entry name" value="hydrophobin_I"/>
    <property type="match status" value="1"/>
</dbReference>
<dbReference type="InterPro" id="IPR001338">
    <property type="entry name" value="Hydrophobin"/>
</dbReference>
<dbReference type="InterPro" id="IPR019778">
    <property type="entry name" value="Hydrophobin_CS"/>
</dbReference>
<dbReference type="Pfam" id="PF01185">
    <property type="entry name" value="Hydrophobin"/>
    <property type="match status" value="1"/>
</dbReference>
<dbReference type="SMART" id="SM00075">
    <property type="entry name" value="HYDRO"/>
    <property type="match status" value="1"/>
</dbReference>
<dbReference type="PROSITE" id="PS00956">
    <property type="entry name" value="HYDROPHOBIN"/>
    <property type="match status" value="1"/>
</dbReference>
<feature type="signal peptide" evidence="4">
    <location>
        <begin position="1"/>
        <end status="unknown"/>
    </location>
</feature>
<feature type="chain" id="PRO_0000462411" description="Class I hydrophobin 19">
    <location>
        <begin status="unknown"/>
        <end position="128"/>
    </location>
</feature>
<feature type="glycosylation site" description="N-linked (GlcNAc...) asparagine" evidence="2">
    <location>
        <position position="110"/>
    </location>
</feature>
<feature type="disulfide bond" evidence="1">
    <location>
        <begin position="48"/>
        <end position="107"/>
    </location>
</feature>
<feature type="disulfide bond" evidence="1">
    <location>
        <begin position="55"/>
        <end position="101"/>
    </location>
</feature>
<feature type="disulfide bond" evidence="1">
    <location>
        <begin position="56"/>
        <end position="88"/>
    </location>
</feature>
<feature type="disulfide bond" evidence="1">
    <location>
        <begin position="108"/>
        <end position="121"/>
    </location>
</feature>
<comment type="function">
    <text evidence="4">Aerial growth, conidiation, and dispersal of filamentous fungi in the environment rely upon a capability of their secreting small amphipathic proteins called hydrophobins (HPBs) with low sequence identity. Class I can self-assemble into an outermost layer of rodlet bundles on aerial cell surfaces, conferring cellular hydrophobicity that supports fungal growth, development and dispersal; whereas Class II form highly ordered films at water-air interfaces through intermolecular interactions but contribute nothing to the rodlet structure.</text>
</comment>
<comment type="subunit">
    <text evidence="1">Self-assembles to form functional amyloid fibrils called rodlets. Self-assembly into fibrillar rodlets occurs spontaneously at hydrophobic:hydrophilic interfaces and the rodlets further associate laterally to form amphipathic monolayers.</text>
</comment>
<comment type="subcellular location">
    <subcellularLocation>
        <location evidence="5">Secreted</location>
    </subcellularLocation>
    <subcellularLocation>
        <location evidence="5">Secreted</location>
        <location evidence="5">Cell wall</location>
    </subcellularLocation>
</comment>
<comment type="similarity">
    <text evidence="4">Belongs to the fungal hydrophobin family.</text>
</comment>
<keyword id="KW-0134">Cell wall</keyword>
<keyword id="KW-1015">Disulfide bond</keyword>
<keyword id="KW-0325">Glycoprotein</keyword>
<keyword id="KW-1185">Reference proteome</keyword>
<keyword id="KW-0964">Secreted</keyword>
<keyword id="KW-0732">Signal</keyword>
<sequence length="128" mass="13309">MILLAFSGELFKRINTSPIVHVERRTNPTTTVTVTTKPSPTPISPNQCNTNKIQCCNSVQSSDAPLLTGLLGLLGIVLQGVIPIGVTCSPISVIGIGGNSCSAQTVCCENNTFNGVIAIGCTPINIDL</sequence>
<proteinExistence type="inferred from homology"/>
<evidence type="ECO:0000250" key="1">
    <source>
        <dbReference type="UniProtKB" id="Q04571"/>
    </source>
</evidence>
<evidence type="ECO:0000255" key="2">
    <source>
        <dbReference type="PROSITE-ProRule" id="PRU00498"/>
    </source>
</evidence>
<evidence type="ECO:0000303" key="3">
    <source>
    </source>
</evidence>
<evidence type="ECO:0000305" key="4"/>
<evidence type="ECO:0000305" key="5">
    <source>
    </source>
</evidence>